<dbReference type="EC" id="2.1.2.1" evidence="1"/>
<dbReference type="EMBL" id="CP000013">
    <property type="protein sequence ID" value="AAU07450.1"/>
    <property type="molecule type" value="Genomic_DNA"/>
</dbReference>
<dbReference type="RefSeq" id="WP_011193908.1">
    <property type="nucleotide sequence ID" value="NZ_CP028872.1"/>
</dbReference>
<dbReference type="SMR" id="Q660S1"/>
<dbReference type="GeneID" id="45161394"/>
<dbReference type="KEGG" id="bga:BG0614"/>
<dbReference type="eggNOG" id="COG0112">
    <property type="taxonomic scope" value="Bacteria"/>
</dbReference>
<dbReference type="HOGENOM" id="CLU_022477_2_1_12"/>
<dbReference type="OrthoDB" id="9803846at2"/>
<dbReference type="UniPathway" id="UPA00193"/>
<dbReference type="UniPathway" id="UPA00288">
    <property type="reaction ID" value="UER01023"/>
</dbReference>
<dbReference type="Proteomes" id="UP000002276">
    <property type="component" value="Chromosome"/>
</dbReference>
<dbReference type="GO" id="GO:0005829">
    <property type="term" value="C:cytosol"/>
    <property type="evidence" value="ECO:0007669"/>
    <property type="project" value="TreeGrafter"/>
</dbReference>
<dbReference type="GO" id="GO:0004372">
    <property type="term" value="F:glycine hydroxymethyltransferase activity"/>
    <property type="evidence" value="ECO:0007669"/>
    <property type="project" value="UniProtKB-UniRule"/>
</dbReference>
<dbReference type="GO" id="GO:0030170">
    <property type="term" value="F:pyridoxal phosphate binding"/>
    <property type="evidence" value="ECO:0007669"/>
    <property type="project" value="UniProtKB-UniRule"/>
</dbReference>
<dbReference type="GO" id="GO:0019264">
    <property type="term" value="P:glycine biosynthetic process from serine"/>
    <property type="evidence" value="ECO:0007669"/>
    <property type="project" value="UniProtKB-UniRule"/>
</dbReference>
<dbReference type="GO" id="GO:0035999">
    <property type="term" value="P:tetrahydrofolate interconversion"/>
    <property type="evidence" value="ECO:0007669"/>
    <property type="project" value="UniProtKB-UniRule"/>
</dbReference>
<dbReference type="CDD" id="cd00378">
    <property type="entry name" value="SHMT"/>
    <property type="match status" value="1"/>
</dbReference>
<dbReference type="FunFam" id="3.40.640.10:FF:000001">
    <property type="entry name" value="Serine hydroxymethyltransferase"/>
    <property type="match status" value="1"/>
</dbReference>
<dbReference type="Gene3D" id="3.90.1150.10">
    <property type="entry name" value="Aspartate Aminotransferase, domain 1"/>
    <property type="match status" value="1"/>
</dbReference>
<dbReference type="Gene3D" id="3.40.640.10">
    <property type="entry name" value="Type I PLP-dependent aspartate aminotransferase-like (Major domain)"/>
    <property type="match status" value="1"/>
</dbReference>
<dbReference type="HAMAP" id="MF_00051">
    <property type="entry name" value="SHMT"/>
    <property type="match status" value="1"/>
</dbReference>
<dbReference type="InterPro" id="IPR015424">
    <property type="entry name" value="PyrdxlP-dep_Trfase"/>
</dbReference>
<dbReference type="InterPro" id="IPR015421">
    <property type="entry name" value="PyrdxlP-dep_Trfase_major"/>
</dbReference>
<dbReference type="InterPro" id="IPR015422">
    <property type="entry name" value="PyrdxlP-dep_Trfase_small"/>
</dbReference>
<dbReference type="InterPro" id="IPR001085">
    <property type="entry name" value="Ser_HO-MeTrfase"/>
</dbReference>
<dbReference type="InterPro" id="IPR049943">
    <property type="entry name" value="Ser_HO-MeTrfase-like"/>
</dbReference>
<dbReference type="InterPro" id="IPR019798">
    <property type="entry name" value="Ser_HO-MeTrfase_PLP_BS"/>
</dbReference>
<dbReference type="InterPro" id="IPR039429">
    <property type="entry name" value="SHMT-like_dom"/>
</dbReference>
<dbReference type="NCBIfam" id="NF000586">
    <property type="entry name" value="PRK00011.1"/>
    <property type="match status" value="1"/>
</dbReference>
<dbReference type="PANTHER" id="PTHR11680">
    <property type="entry name" value="SERINE HYDROXYMETHYLTRANSFERASE"/>
    <property type="match status" value="1"/>
</dbReference>
<dbReference type="PANTHER" id="PTHR11680:SF35">
    <property type="entry name" value="SERINE HYDROXYMETHYLTRANSFERASE 1"/>
    <property type="match status" value="1"/>
</dbReference>
<dbReference type="Pfam" id="PF00464">
    <property type="entry name" value="SHMT"/>
    <property type="match status" value="1"/>
</dbReference>
<dbReference type="PIRSF" id="PIRSF000412">
    <property type="entry name" value="SHMT"/>
    <property type="match status" value="1"/>
</dbReference>
<dbReference type="SUPFAM" id="SSF53383">
    <property type="entry name" value="PLP-dependent transferases"/>
    <property type="match status" value="1"/>
</dbReference>
<dbReference type="PROSITE" id="PS00096">
    <property type="entry name" value="SHMT"/>
    <property type="match status" value="1"/>
</dbReference>
<protein>
    <recommendedName>
        <fullName evidence="1">Serine hydroxymethyltransferase</fullName>
        <shortName evidence="1">SHMT</shortName>
        <shortName evidence="1">Serine methylase</shortName>
        <ecNumber evidence="1">2.1.2.1</ecNumber>
    </recommendedName>
</protein>
<comment type="function">
    <text evidence="1">Catalyzes the reversible interconversion of serine and glycine with tetrahydrofolate (THF) serving as the one-carbon carrier. This reaction serves as the major source of one-carbon groups required for the biosynthesis of purines, thymidylate, methionine, and other important biomolecules. Also exhibits THF-independent aldolase activity toward beta-hydroxyamino acids, producing glycine and aldehydes, via a retro-aldol mechanism.</text>
</comment>
<comment type="catalytic activity">
    <reaction evidence="1">
        <text>(6R)-5,10-methylene-5,6,7,8-tetrahydrofolate + glycine + H2O = (6S)-5,6,7,8-tetrahydrofolate + L-serine</text>
        <dbReference type="Rhea" id="RHEA:15481"/>
        <dbReference type="ChEBI" id="CHEBI:15377"/>
        <dbReference type="ChEBI" id="CHEBI:15636"/>
        <dbReference type="ChEBI" id="CHEBI:33384"/>
        <dbReference type="ChEBI" id="CHEBI:57305"/>
        <dbReference type="ChEBI" id="CHEBI:57453"/>
        <dbReference type="EC" id="2.1.2.1"/>
    </reaction>
</comment>
<comment type="cofactor">
    <cofactor evidence="1">
        <name>pyridoxal 5'-phosphate</name>
        <dbReference type="ChEBI" id="CHEBI:597326"/>
    </cofactor>
</comment>
<comment type="pathway">
    <text evidence="1">One-carbon metabolism; tetrahydrofolate interconversion.</text>
</comment>
<comment type="pathway">
    <text evidence="1">Amino-acid biosynthesis; glycine biosynthesis; glycine from L-serine: step 1/1.</text>
</comment>
<comment type="subunit">
    <text evidence="1">Homodimer.</text>
</comment>
<comment type="subcellular location">
    <subcellularLocation>
        <location evidence="1">Cytoplasm</location>
    </subcellularLocation>
</comment>
<comment type="similarity">
    <text evidence="1">Belongs to the SHMT family.</text>
</comment>
<feature type="chain" id="PRO_0000113540" description="Serine hydroxymethyltransferase">
    <location>
        <begin position="1"/>
        <end position="417"/>
    </location>
</feature>
<feature type="binding site" evidence="1">
    <location>
        <position position="112"/>
    </location>
    <ligand>
        <name>(6S)-5,6,7,8-tetrahydrofolate</name>
        <dbReference type="ChEBI" id="CHEBI:57453"/>
    </ligand>
</feature>
<feature type="binding site" evidence="1">
    <location>
        <begin position="116"/>
        <end position="118"/>
    </location>
    <ligand>
        <name>(6S)-5,6,7,8-tetrahydrofolate</name>
        <dbReference type="ChEBI" id="CHEBI:57453"/>
    </ligand>
</feature>
<feature type="binding site" evidence="1">
    <location>
        <position position="247"/>
    </location>
    <ligand>
        <name>(6S)-5,6,7,8-tetrahydrofolate</name>
        <dbReference type="ChEBI" id="CHEBI:57453"/>
    </ligand>
</feature>
<feature type="site" description="Plays an important role in substrate specificity" evidence="1">
    <location>
        <position position="220"/>
    </location>
</feature>
<feature type="modified residue" description="N6-(pyridoxal phosphate)lysine" evidence="1">
    <location>
        <position position="221"/>
    </location>
</feature>
<accession>Q660S1</accession>
<gene>
    <name evidence="1" type="primary">glyA</name>
    <name type="ordered locus">BG0614</name>
</gene>
<reference key="1">
    <citation type="journal article" date="2004" name="Nucleic Acids Res.">
        <title>Comparative analysis of the Borrelia garinii genome.</title>
        <authorList>
            <person name="Gloeckner G."/>
            <person name="Lehmann R."/>
            <person name="Romualdi A."/>
            <person name="Pradella S."/>
            <person name="Schulte-Spechtel U."/>
            <person name="Schilhabel M."/>
            <person name="Wilske B."/>
            <person name="Suehnel J."/>
            <person name="Platzer M."/>
        </authorList>
    </citation>
    <scope>NUCLEOTIDE SEQUENCE [LARGE SCALE GENOMIC DNA]</scope>
    <source>
        <strain>ATCC BAA-2496 / DSM 23469 / PBi</strain>
    </source>
</reference>
<name>GLYA_BORGP</name>
<keyword id="KW-0028">Amino-acid biosynthesis</keyword>
<keyword id="KW-0963">Cytoplasm</keyword>
<keyword id="KW-0554">One-carbon metabolism</keyword>
<keyword id="KW-0663">Pyridoxal phosphate</keyword>
<keyword id="KW-0808">Transferase</keyword>
<sequence>MRDDQIFNLIEKEKLREKEHIKLIASENFTSLEIRQAVGSILTNKYAEGYPLNRYYGGCSFVDEIESLAILRAKELFGAKYANVQPHSGSQANMAAIMALINPGDRILGMQLSHGGHLTHGSRVNFSGIFFNTYFYGVSRDSELIDYDEVLKIARDCRPNLIIAGASSYSREIDFKKFREIADDVSAYLLCDIAHIAGLIVAGFHNSSIDVAHLTTSTTHKTLRGPRGGIILSGKDFDKLVTFNGKEKALFNAVNSTVFPGTQGGPLVHVIAGKAIAFREALQESFREYIANVIKNTKVMAEYFKSEGFRIVSGGTDNHLFLVDLSNLDLTGADAEKLLEGVNITLNKNAIPFDKKSPSLASGIRIGGAAITSRGLNENDSLNVAKFIVRALKTRSDIELKQIKKEVVRFIRDFDMP</sequence>
<proteinExistence type="inferred from homology"/>
<organism>
    <name type="scientific">Borrelia garinii subsp. bavariensis (strain ATCC BAA-2496 / DSM 23469 / PBi)</name>
    <name type="common">Borreliella bavariensis</name>
    <dbReference type="NCBI Taxonomy" id="290434"/>
    <lineage>
        <taxon>Bacteria</taxon>
        <taxon>Pseudomonadati</taxon>
        <taxon>Spirochaetota</taxon>
        <taxon>Spirochaetia</taxon>
        <taxon>Spirochaetales</taxon>
        <taxon>Borreliaceae</taxon>
        <taxon>Borreliella</taxon>
    </lineage>
</organism>
<evidence type="ECO:0000255" key="1">
    <source>
        <dbReference type="HAMAP-Rule" id="MF_00051"/>
    </source>
</evidence>